<reference key="1">
    <citation type="journal article" date="2007" name="BMC Microbiol.">
        <title>Subtle genetic changes enhance virulence of methicillin resistant and sensitive Staphylococcus aureus.</title>
        <authorList>
            <person name="Highlander S.K."/>
            <person name="Hulten K.G."/>
            <person name="Qin X."/>
            <person name="Jiang H."/>
            <person name="Yerrapragada S."/>
            <person name="Mason E.O. Jr."/>
            <person name="Shang Y."/>
            <person name="Williams T.M."/>
            <person name="Fortunov R.M."/>
            <person name="Liu Y."/>
            <person name="Igboeli O."/>
            <person name="Petrosino J."/>
            <person name="Tirumalai M."/>
            <person name="Uzman A."/>
            <person name="Fox G.E."/>
            <person name="Cardenas A.M."/>
            <person name="Muzny D.M."/>
            <person name="Hemphill L."/>
            <person name="Ding Y."/>
            <person name="Dugan S."/>
            <person name="Blyth P.R."/>
            <person name="Buhay C.J."/>
            <person name="Dinh H.H."/>
            <person name="Hawes A.C."/>
            <person name="Holder M."/>
            <person name="Kovar C.L."/>
            <person name="Lee S.L."/>
            <person name="Liu W."/>
            <person name="Nazareth L.V."/>
            <person name="Wang Q."/>
            <person name="Zhou J."/>
            <person name="Kaplan S.L."/>
            <person name="Weinstock G.M."/>
        </authorList>
    </citation>
    <scope>NUCLEOTIDE SEQUENCE [LARGE SCALE GENOMIC DNA]</scope>
    <source>
        <strain>USA300 / TCH1516</strain>
    </source>
</reference>
<proteinExistence type="inferred from homology"/>
<organism>
    <name type="scientific">Staphylococcus aureus (strain USA300 / TCH1516)</name>
    <dbReference type="NCBI Taxonomy" id="451516"/>
    <lineage>
        <taxon>Bacteria</taxon>
        <taxon>Bacillati</taxon>
        <taxon>Bacillota</taxon>
        <taxon>Bacilli</taxon>
        <taxon>Bacillales</taxon>
        <taxon>Staphylococcaceae</taxon>
        <taxon>Staphylococcus</taxon>
    </lineage>
</organism>
<keyword id="KW-0030">Aminoacyl-tRNA synthetase</keyword>
<keyword id="KW-0067">ATP-binding</keyword>
<keyword id="KW-0963">Cytoplasm</keyword>
<keyword id="KW-0436">Ligase</keyword>
<keyword id="KW-0547">Nucleotide-binding</keyword>
<keyword id="KW-0648">Protein biosynthesis</keyword>
<feature type="chain" id="PRO_1000081860" description="Asparagine--tRNA ligase">
    <location>
        <begin position="1"/>
        <end position="430"/>
    </location>
</feature>
<dbReference type="EC" id="6.1.1.22" evidence="1"/>
<dbReference type="EMBL" id="CP000730">
    <property type="protein sequence ID" value="ABX29402.1"/>
    <property type="molecule type" value="Genomic_DNA"/>
</dbReference>
<dbReference type="RefSeq" id="WP_000858789.1">
    <property type="nucleotide sequence ID" value="NC_010079.1"/>
</dbReference>
<dbReference type="SMR" id="A8Z434"/>
<dbReference type="KEGG" id="sax:USA300HOU_1392"/>
<dbReference type="HOGENOM" id="CLU_004553_2_0_9"/>
<dbReference type="GO" id="GO:0005737">
    <property type="term" value="C:cytoplasm"/>
    <property type="evidence" value="ECO:0007669"/>
    <property type="project" value="UniProtKB-SubCell"/>
</dbReference>
<dbReference type="GO" id="GO:0004816">
    <property type="term" value="F:asparagine-tRNA ligase activity"/>
    <property type="evidence" value="ECO:0007669"/>
    <property type="project" value="UniProtKB-UniRule"/>
</dbReference>
<dbReference type="GO" id="GO:0005524">
    <property type="term" value="F:ATP binding"/>
    <property type="evidence" value="ECO:0007669"/>
    <property type="project" value="UniProtKB-UniRule"/>
</dbReference>
<dbReference type="GO" id="GO:0140096">
    <property type="term" value="F:catalytic activity, acting on a protein"/>
    <property type="evidence" value="ECO:0007669"/>
    <property type="project" value="UniProtKB-ARBA"/>
</dbReference>
<dbReference type="GO" id="GO:0003676">
    <property type="term" value="F:nucleic acid binding"/>
    <property type="evidence" value="ECO:0007669"/>
    <property type="project" value="InterPro"/>
</dbReference>
<dbReference type="GO" id="GO:0016740">
    <property type="term" value="F:transferase activity"/>
    <property type="evidence" value="ECO:0007669"/>
    <property type="project" value="UniProtKB-ARBA"/>
</dbReference>
<dbReference type="GO" id="GO:0006421">
    <property type="term" value="P:asparaginyl-tRNA aminoacylation"/>
    <property type="evidence" value="ECO:0007669"/>
    <property type="project" value="UniProtKB-UniRule"/>
</dbReference>
<dbReference type="CDD" id="cd04323">
    <property type="entry name" value="AsnRS_cyto_like_N"/>
    <property type="match status" value="1"/>
</dbReference>
<dbReference type="CDD" id="cd00776">
    <property type="entry name" value="AsxRS_core"/>
    <property type="match status" value="1"/>
</dbReference>
<dbReference type="Gene3D" id="3.30.930.10">
    <property type="entry name" value="Bira Bifunctional Protein, Domain 2"/>
    <property type="match status" value="1"/>
</dbReference>
<dbReference type="Gene3D" id="2.40.50.140">
    <property type="entry name" value="Nucleic acid-binding proteins"/>
    <property type="match status" value="1"/>
</dbReference>
<dbReference type="HAMAP" id="MF_00534">
    <property type="entry name" value="Asn_tRNA_synth"/>
    <property type="match status" value="1"/>
</dbReference>
<dbReference type="InterPro" id="IPR004364">
    <property type="entry name" value="Aa-tRNA-synt_II"/>
</dbReference>
<dbReference type="InterPro" id="IPR006195">
    <property type="entry name" value="aa-tRNA-synth_II"/>
</dbReference>
<dbReference type="InterPro" id="IPR045864">
    <property type="entry name" value="aa-tRNA-synth_II/BPL/LPL"/>
</dbReference>
<dbReference type="InterPro" id="IPR004522">
    <property type="entry name" value="Asn-tRNA-ligase"/>
</dbReference>
<dbReference type="InterPro" id="IPR002312">
    <property type="entry name" value="Asp/Asn-tRNA-synth_IIb"/>
</dbReference>
<dbReference type="InterPro" id="IPR012340">
    <property type="entry name" value="NA-bd_OB-fold"/>
</dbReference>
<dbReference type="InterPro" id="IPR004365">
    <property type="entry name" value="NA-bd_OB_tRNA"/>
</dbReference>
<dbReference type="NCBIfam" id="TIGR00457">
    <property type="entry name" value="asnS"/>
    <property type="match status" value="1"/>
</dbReference>
<dbReference type="NCBIfam" id="NF003037">
    <property type="entry name" value="PRK03932.1"/>
    <property type="match status" value="1"/>
</dbReference>
<dbReference type="NCBIfam" id="NF003483">
    <property type="entry name" value="PRK05159.1"/>
    <property type="match status" value="1"/>
</dbReference>
<dbReference type="PANTHER" id="PTHR22594:SF34">
    <property type="entry name" value="ASPARAGINE--TRNA LIGASE, MITOCHONDRIAL-RELATED"/>
    <property type="match status" value="1"/>
</dbReference>
<dbReference type="PANTHER" id="PTHR22594">
    <property type="entry name" value="ASPARTYL/LYSYL-TRNA SYNTHETASE"/>
    <property type="match status" value="1"/>
</dbReference>
<dbReference type="Pfam" id="PF00152">
    <property type="entry name" value="tRNA-synt_2"/>
    <property type="match status" value="1"/>
</dbReference>
<dbReference type="Pfam" id="PF01336">
    <property type="entry name" value="tRNA_anti-codon"/>
    <property type="match status" value="1"/>
</dbReference>
<dbReference type="PRINTS" id="PR01042">
    <property type="entry name" value="TRNASYNTHASP"/>
</dbReference>
<dbReference type="SUPFAM" id="SSF55681">
    <property type="entry name" value="Class II aaRS and biotin synthetases"/>
    <property type="match status" value="1"/>
</dbReference>
<dbReference type="SUPFAM" id="SSF50249">
    <property type="entry name" value="Nucleic acid-binding proteins"/>
    <property type="match status" value="1"/>
</dbReference>
<dbReference type="PROSITE" id="PS50862">
    <property type="entry name" value="AA_TRNA_LIGASE_II"/>
    <property type="match status" value="1"/>
</dbReference>
<evidence type="ECO:0000255" key="1">
    <source>
        <dbReference type="HAMAP-Rule" id="MF_00534"/>
    </source>
</evidence>
<gene>
    <name evidence="1" type="primary">asnS</name>
    <name type="ordered locus">USA300HOU_1392</name>
</gene>
<protein>
    <recommendedName>
        <fullName evidence="1">Asparagine--tRNA ligase</fullName>
        <ecNumber evidence="1">6.1.1.22</ecNumber>
    </recommendedName>
    <alternativeName>
        <fullName evidence="1">Asparaginyl-tRNA synthetase</fullName>
        <shortName evidence="1">AsnRS</shortName>
    </alternativeName>
</protein>
<name>SYN_STAAT</name>
<sequence length="430" mass="49158">MKTTIKQAKDHLNQDVTIGAWLTNKRSSGKIAFLQLRDGTGFMQGVVVKSEVDEEVFKLAKEITQESSLYVTGTITEDNRSDLGYEMQVKSIEVISEAHDYPITPKNHGTEFLMDHRHLWLRSKKQHAVMKIRNEVIRATYEFFNKDGFTKVDPPILTASAPEGTSELFHTKYFDQDAFLSQSGQLYLEAAAMAHGKVFSFGPTFRAEKSKTRRHLIEFWMIEGEMAFTNHAESLEIQEQYVTHVVKSVLENCKLELKILERDTSKLEKVATPFPRISYDDAIEFLKAEGFDDIEWGEDFGAPHETAIANHYDLPVFITNYPTKIKPFYMQPNPENEETVLCADLIAPEGYGEIIGGSERVDDLELLEQRVKEHGLDEEAYSYYLDLRRYGSVPHCGFGLGLERTVAWISGVEHVRETAPFPRLLNRLYP</sequence>
<comment type="catalytic activity">
    <reaction evidence="1">
        <text>tRNA(Asn) + L-asparagine + ATP = L-asparaginyl-tRNA(Asn) + AMP + diphosphate + H(+)</text>
        <dbReference type="Rhea" id="RHEA:11180"/>
        <dbReference type="Rhea" id="RHEA-COMP:9659"/>
        <dbReference type="Rhea" id="RHEA-COMP:9674"/>
        <dbReference type="ChEBI" id="CHEBI:15378"/>
        <dbReference type="ChEBI" id="CHEBI:30616"/>
        <dbReference type="ChEBI" id="CHEBI:33019"/>
        <dbReference type="ChEBI" id="CHEBI:58048"/>
        <dbReference type="ChEBI" id="CHEBI:78442"/>
        <dbReference type="ChEBI" id="CHEBI:78515"/>
        <dbReference type="ChEBI" id="CHEBI:456215"/>
        <dbReference type="EC" id="6.1.1.22"/>
    </reaction>
</comment>
<comment type="subunit">
    <text evidence="1">Homodimer.</text>
</comment>
<comment type="subcellular location">
    <subcellularLocation>
        <location evidence="1">Cytoplasm</location>
    </subcellularLocation>
</comment>
<comment type="similarity">
    <text evidence="1">Belongs to the class-II aminoacyl-tRNA synthetase family.</text>
</comment>
<accession>A8Z434</accession>